<comment type="function">
    <text evidence="1">Catalyzes the four-electron reduction of biliverdin IX-alpha (2-electron reduction at both the A and D rings); the reaction proceeds via an isolatable 2-electron intermediate, 181,182-dihydrobiliverdin.</text>
</comment>
<comment type="catalytic activity">
    <reaction evidence="1">
        <text>(2R,3Z)-phycocyanobilin + 4 oxidized [2Fe-2S]-[ferredoxin] = biliverdin IXalpha + 4 reduced [2Fe-2S]-[ferredoxin] + 4 H(+)</text>
        <dbReference type="Rhea" id="RHEA:15309"/>
        <dbReference type="Rhea" id="RHEA-COMP:10000"/>
        <dbReference type="Rhea" id="RHEA-COMP:10001"/>
        <dbReference type="ChEBI" id="CHEBI:15378"/>
        <dbReference type="ChEBI" id="CHEBI:33737"/>
        <dbReference type="ChEBI" id="CHEBI:33738"/>
        <dbReference type="ChEBI" id="CHEBI:57437"/>
        <dbReference type="ChEBI" id="CHEBI:57991"/>
        <dbReference type="EC" id="1.3.7.5"/>
    </reaction>
</comment>
<comment type="similarity">
    <text evidence="1">Belongs to the HY2 family.</text>
</comment>
<proteinExistence type="inferred from homology"/>
<organism>
    <name type="scientific">Prochlorococcus marinus (strain MIT 9312)</name>
    <dbReference type="NCBI Taxonomy" id="74546"/>
    <lineage>
        <taxon>Bacteria</taxon>
        <taxon>Bacillati</taxon>
        <taxon>Cyanobacteriota</taxon>
        <taxon>Cyanophyceae</taxon>
        <taxon>Synechococcales</taxon>
        <taxon>Prochlorococcaceae</taxon>
        <taxon>Prochlorococcus</taxon>
    </lineage>
</organism>
<sequence>MLSESLTKTKLTDPLILELLQNIREHRSMLEDLKSIKVDPELSNIISNEIGRELYIENEFHKARGFRKLHIEVAEFSKNLKILHCVFFPDPKFDIPIFGMDLVKINDIVSAAIVDLSPASQNQGVKYEKFLSKVDKSSFTSLREIPKWGEIFSENVFFASLKSKSEENDFCKVVDEYLSILIKLSKEAKPEFKEEIIKERKNYQKNYCVQQMKNEKTSMVLLKYFDEKWVNNYIKTVLFDF</sequence>
<feature type="chain" id="PRO_1000190497" description="Phycocyanobilin:ferredoxin oxidoreductase">
    <location>
        <begin position="1"/>
        <end position="241"/>
    </location>
</feature>
<dbReference type="EC" id="1.3.7.5" evidence="1"/>
<dbReference type="EMBL" id="CP000111">
    <property type="protein sequence ID" value="ABB49815.1"/>
    <property type="molecule type" value="Genomic_DNA"/>
</dbReference>
<dbReference type="RefSeq" id="WP_011376310.1">
    <property type="nucleotide sequence ID" value="NC_007577.1"/>
</dbReference>
<dbReference type="SMR" id="Q31BD0"/>
<dbReference type="STRING" id="74546.PMT9312_0755"/>
<dbReference type="KEGG" id="pmi:PMT9312_0755"/>
<dbReference type="eggNOG" id="ENOG502Z7RN">
    <property type="taxonomic scope" value="Bacteria"/>
</dbReference>
<dbReference type="HOGENOM" id="CLU_074224_0_0_3"/>
<dbReference type="OrthoDB" id="581340at2"/>
<dbReference type="Proteomes" id="UP000002715">
    <property type="component" value="Chromosome"/>
</dbReference>
<dbReference type="GO" id="GO:0050897">
    <property type="term" value="F:cobalt ion binding"/>
    <property type="evidence" value="ECO:0007669"/>
    <property type="project" value="InterPro"/>
</dbReference>
<dbReference type="GO" id="GO:0050620">
    <property type="term" value="F:phycocyanobilin:ferredoxin oxidoreductase activity"/>
    <property type="evidence" value="ECO:0007669"/>
    <property type="project" value="UniProtKB-UniRule"/>
</dbReference>
<dbReference type="GO" id="GO:0010024">
    <property type="term" value="P:phytochromobilin biosynthetic process"/>
    <property type="evidence" value="ECO:0007669"/>
    <property type="project" value="InterPro"/>
</dbReference>
<dbReference type="Gene3D" id="3.40.1500.20">
    <property type="match status" value="1"/>
</dbReference>
<dbReference type="HAMAP" id="MF_00618">
    <property type="entry name" value="Ferredoxin_bilin_red"/>
    <property type="match status" value="1"/>
</dbReference>
<dbReference type="InterPro" id="IPR009249">
    <property type="entry name" value="Ferredoxin-dep_bilin_Rdtase"/>
</dbReference>
<dbReference type="InterPro" id="IPR022870">
    <property type="entry name" value="Ferredoxin_bilin_OxRdtase"/>
</dbReference>
<dbReference type="NCBIfam" id="NF002760">
    <property type="entry name" value="PRK02816.1"/>
    <property type="match status" value="1"/>
</dbReference>
<dbReference type="PANTHER" id="PTHR34557">
    <property type="entry name" value="PHYTOCHROMOBILIN:FERREDOXIN OXIDOREDUCTASE, CHLOROPLASTIC"/>
    <property type="match status" value="1"/>
</dbReference>
<dbReference type="PANTHER" id="PTHR34557:SF1">
    <property type="entry name" value="PHYTOCHROMOBILIN:FERREDOXIN OXIDOREDUCTASE, CHLOROPLASTIC"/>
    <property type="match status" value="1"/>
</dbReference>
<dbReference type="Pfam" id="PF05996">
    <property type="entry name" value="Fe_bilin_red"/>
    <property type="match status" value="1"/>
</dbReference>
<keyword id="KW-0560">Oxidoreductase</keyword>
<accession>Q31BD0</accession>
<protein>
    <recommendedName>
        <fullName evidence="1">Phycocyanobilin:ferredoxin oxidoreductase</fullName>
        <ecNumber evidence="1">1.3.7.5</ecNumber>
    </recommendedName>
</protein>
<gene>
    <name evidence="1" type="primary">pcyA</name>
    <name type="ordered locus">PMT9312_0755</name>
</gene>
<name>PCYA_PROM9</name>
<evidence type="ECO:0000255" key="1">
    <source>
        <dbReference type="HAMAP-Rule" id="MF_00618"/>
    </source>
</evidence>
<reference key="1">
    <citation type="journal article" date="2006" name="Science">
        <title>Genomic islands and the ecology and evolution of Prochlorococcus.</title>
        <authorList>
            <person name="Coleman M.L."/>
            <person name="Sullivan M.B."/>
            <person name="Martiny A.C."/>
            <person name="Steglich C."/>
            <person name="Barry K."/>
            <person name="Delong E.F."/>
            <person name="Chisholm S.W."/>
        </authorList>
    </citation>
    <scope>NUCLEOTIDE SEQUENCE [LARGE SCALE GENOMIC DNA]</scope>
    <source>
        <strain>MIT 9312</strain>
    </source>
</reference>